<feature type="chain" id="PRO_0000231923" description="RNA pyrophosphohydrolase">
    <location>
        <begin position="1"/>
        <end position="172"/>
    </location>
</feature>
<feature type="domain" description="Nudix hydrolase" evidence="1">
    <location>
        <begin position="6"/>
        <end position="149"/>
    </location>
</feature>
<feature type="short sequence motif" description="Nudix box">
    <location>
        <begin position="38"/>
        <end position="59"/>
    </location>
</feature>
<accession>Q3IDL9</accession>
<proteinExistence type="inferred from homology"/>
<organism>
    <name type="scientific">Pseudoalteromonas translucida (strain TAC 125)</name>
    <dbReference type="NCBI Taxonomy" id="326442"/>
    <lineage>
        <taxon>Bacteria</taxon>
        <taxon>Pseudomonadati</taxon>
        <taxon>Pseudomonadota</taxon>
        <taxon>Gammaproteobacteria</taxon>
        <taxon>Alteromonadales</taxon>
        <taxon>Pseudoalteromonadaceae</taxon>
        <taxon>Pseudoalteromonas</taxon>
    </lineage>
</organism>
<reference key="1">
    <citation type="journal article" date="2005" name="Genome Res.">
        <title>Coping with cold: the genome of the versatile marine Antarctica bacterium Pseudoalteromonas haloplanktis TAC125.</title>
        <authorList>
            <person name="Medigue C."/>
            <person name="Krin E."/>
            <person name="Pascal G."/>
            <person name="Barbe V."/>
            <person name="Bernsel A."/>
            <person name="Bertin P.N."/>
            <person name="Cheung F."/>
            <person name="Cruveiller S."/>
            <person name="D'Amico S."/>
            <person name="Duilio A."/>
            <person name="Fang G."/>
            <person name="Feller G."/>
            <person name="Ho C."/>
            <person name="Mangenot S."/>
            <person name="Marino G."/>
            <person name="Nilsson J."/>
            <person name="Parrilli E."/>
            <person name="Rocha E.P.C."/>
            <person name="Rouy Z."/>
            <person name="Sekowska A."/>
            <person name="Tutino M.L."/>
            <person name="Vallenet D."/>
            <person name="von Heijne G."/>
            <person name="Danchin A."/>
        </authorList>
    </citation>
    <scope>NUCLEOTIDE SEQUENCE [LARGE SCALE GENOMIC DNA]</scope>
    <source>
        <strain>TAC 125</strain>
    </source>
</reference>
<sequence>MIDAEGFRANVGIVICNNQGQVFWARRYGQHSWQFPQGGVDDGETPEQTMYRELHEEVGLRPEDVEIVASSKHWLRYKLPKRLIRRDSSPVCIGQKQKWFLLKLRCKDEDVNLLKTHHPEFDDWRWVSYWYPVRQVVSFKRDVYRRVMKEFAPFAMPFNKREQQKDHWRNKR</sequence>
<comment type="function">
    <text evidence="1">Accelerates the degradation of transcripts by removing pyrophosphate from the 5'-end of triphosphorylated RNA, leading to a more labile monophosphorylated state that can stimulate subsequent ribonuclease cleavage.</text>
</comment>
<comment type="cofactor">
    <cofactor evidence="1">
        <name>a divalent metal cation</name>
        <dbReference type="ChEBI" id="CHEBI:60240"/>
    </cofactor>
</comment>
<comment type="similarity">
    <text evidence="1">Belongs to the Nudix hydrolase family. RppH subfamily.</text>
</comment>
<evidence type="ECO:0000255" key="1">
    <source>
        <dbReference type="HAMAP-Rule" id="MF_00298"/>
    </source>
</evidence>
<dbReference type="EC" id="3.6.1.-" evidence="1"/>
<dbReference type="EMBL" id="CR954246">
    <property type="protein sequence ID" value="CAI85828.1"/>
    <property type="molecule type" value="Genomic_DNA"/>
</dbReference>
<dbReference type="SMR" id="Q3IDL9"/>
<dbReference type="STRING" id="326442.PSHAa0745"/>
<dbReference type="KEGG" id="pha:PSHAa0745"/>
<dbReference type="eggNOG" id="COG1051">
    <property type="taxonomic scope" value="Bacteria"/>
</dbReference>
<dbReference type="HOGENOM" id="CLU_087195_3_2_6"/>
<dbReference type="BioCyc" id="PHAL326442:PSHA_RS03635-MONOMER"/>
<dbReference type="Proteomes" id="UP000006843">
    <property type="component" value="Chromosome I"/>
</dbReference>
<dbReference type="GO" id="GO:0005737">
    <property type="term" value="C:cytoplasm"/>
    <property type="evidence" value="ECO:0007669"/>
    <property type="project" value="TreeGrafter"/>
</dbReference>
<dbReference type="GO" id="GO:0034353">
    <property type="term" value="F:mRNA 5'-diphosphatase activity"/>
    <property type="evidence" value="ECO:0007669"/>
    <property type="project" value="TreeGrafter"/>
</dbReference>
<dbReference type="GO" id="GO:0006402">
    <property type="term" value="P:mRNA catabolic process"/>
    <property type="evidence" value="ECO:0007669"/>
    <property type="project" value="TreeGrafter"/>
</dbReference>
<dbReference type="CDD" id="cd03671">
    <property type="entry name" value="NUDIX_Ap4A_hydrolase_plant_like"/>
    <property type="match status" value="1"/>
</dbReference>
<dbReference type="FunFam" id="3.90.79.10:FF:000001">
    <property type="entry name" value="RNA pyrophosphohydrolase"/>
    <property type="match status" value="1"/>
</dbReference>
<dbReference type="Gene3D" id="3.90.79.10">
    <property type="entry name" value="Nucleoside Triphosphate Pyrophosphohydrolase"/>
    <property type="match status" value="1"/>
</dbReference>
<dbReference type="HAMAP" id="MF_00298">
    <property type="entry name" value="Nudix_RppH"/>
    <property type="match status" value="1"/>
</dbReference>
<dbReference type="InterPro" id="IPR020476">
    <property type="entry name" value="Nudix_hydrolase"/>
</dbReference>
<dbReference type="InterPro" id="IPR015797">
    <property type="entry name" value="NUDIX_hydrolase-like_dom_sf"/>
</dbReference>
<dbReference type="InterPro" id="IPR020084">
    <property type="entry name" value="NUDIX_hydrolase_CS"/>
</dbReference>
<dbReference type="InterPro" id="IPR000086">
    <property type="entry name" value="NUDIX_hydrolase_dom"/>
</dbReference>
<dbReference type="InterPro" id="IPR022927">
    <property type="entry name" value="RppH"/>
</dbReference>
<dbReference type="NCBIfam" id="NF001934">
    <property type="entry name" value="PRK00714.1-1"/>
    <property type="match status" value="1"/>
</dbReference>
<dbReference type="NCBIfam" id="NF001936">
    <property type="entry name" value="PRK00714.1-3"/>
    <property type="match status" value="1"/>
</dbReference>
<dbReference type="NCBIfam" id="NF001937">
    <property type="entry name" value="PRK00714.1-4"/>
    <property type="match status" value="1"/>
</dbReference>
<dbReference type="NCBIfam" id="NF001938">
    <property type="entry name" value="PRK00714.1-5"/>
    <property type="match status" value="1"/>
</dbReference>
<dbReference type="PANTHER" id="PTHR23114">
    <property type="entry name" value="M7GPPPN-MRNA HYDROLASE"/>
    <property type="match status" value="1"/>
</dbReference>
<dbReference type="PANTHER" id="PTHR23114:SF17">
    <property type="entry name" value="M7GPPPN-MRNA HYDROLASE"/>
    <property type="match status" value="1"/>
</dbReference>
<dbReference type="Pfam" id="PF00293">
    <property type="entry name" value="NUDIX"/>
    <property type="match status" value="1"/>
</dbReference>
<dbReference type="PRINTS" id="PR00502">
    <property type="entry name" value="NUDIXFAMILY"/>
</dbReference>
<dbReference type="SUPFAM" id="SSF55811">
    <property type="entry name" value="Nudix"/>
    <property type="match status" value="1"/>
</dbReference>
<dbReference type="PROSITE" id="PS51462">
    <property type="entry name" value="NUDIX"/>
    <property type="match status" value="1"/>
</dbReference>
<dbReference type="PROSITE" id="PS00893">
    <property type="entry name" value="NUDIX_BOX"/>
    <property type="match status" value="1"/>
</dbReference>
<protein>
    <recommendedName>
        <fullName evidence="1">RNA pyrophosphohydrolase</fullName>
        <ecNumber evidence="1">3.6.1.-</ecNumber>
    </recommendedName>
    <alternativeName>
        <fullName evidence="1">(Di)nucleoside polyphosphate hydrolase</fullName>
    </alternativeName>
</protein>
<gene>
    <name evidence="1" type="primary">rppH</name>
    <name evidence="1" type="synonym">nudH</name>
    <name type="ordered locus">PSHAa0745</name>
</gene>
<keyword id="KW-0378">Hydrolase</keyword>
<keyword id="KW-1185">Reference proteome</keyword>
<name>RPPH_PSET1</name>